<proteinExistence type="predicted"/>
<organism>
    <name type="scientific">Caenorhabditis elegans</name>
    <dbReference type="NCBI Taxonomy" id="6239"/>
    <lineage>
        <taxon>Eukaryota</taxon>
        <taxon>Metazoa</taxon>
        <taxon>Ecdysozoa</taxon>
        <taxon>Nematoda</taxon>
        <taxon>Chromadorea</taxon>
        <taxon>Rhabditida</taxon>
        <taxon>Rhabditina</taxon>
        <taxon>Rhabditomorpha</taxon>
        <taxon>Rhabditoidea</taxon>
        <taxon>Rhabditidae</taxon>
        <taxon>Peloderinae</taxon>
        <taxon>Caenorhabditis</taxon>
    </lineage>
</organism>
<gene>
    <name type="ORF">F09G8.5</name>
</gene>
<name>YLS5_CAEEL</name>
<keyword id="KW-0433">Leucine-rich repeat</keyword>
<keyword id="KW-1185">Reference proteome</keyword>
<keyword id="KW-0677">Repeat</keyword>
<accession>P34390</accession>
<feature type="chain" id="PRO_0000065282" description="Uncharacterized protein F09G8.5">
    <location>
        <begin position="1"/>
        <end position="461"/>
    </location>
</feature>
<feature type="repeat" description="LRR 1">
    <location>
        <begin position="119"/>
        <end position="140"/>
    </location>
</feature>
<feature type="repeat" description="LRR 2">
    <location>
        <begin position="141"/>
        <end position="162"/>
    </location>
</feature>
<feature type="repeat" description="LRR 3">
    <location>
        <begin position="163"/>
        <end position="184"/>
    </location>
</feature>
<feature type="domain" description="LRRCT">
    <location>
        <begin position="197"/>
        <end position="237"/>
    </location>
</feature>
<dbReference type="EMBL" id="FO080289">
    <property type="protein sequence ID" value="CCD62650.1"/>
    <property type="molecule type" value="Genomic_DNA"/>
</dbReference>
<dbReference type="RefSeq" id="NP_498812.2">
    <property type="nucleotide sequence ID" value="NM_066411.3"/>
</dbReference>
<dbReference type="SMR" id="P34390"/>
<dbReference type="PaxDb" id="6239-F09G8.5"/>
<dbReference type="EnsemblMetazoa" id="F09G8.5.1">
    <property type="protein sequence ID" value="F09G8.5.1"/>
    <property type="gene ID" value="WBGene00017320"/>
</dbReference>
<dbReference type="GeneID" id="184268"/>
<dbReference type="KEGG" id="cel:CELE_F09G8.5"/>
<dbReference type="UCSC" id="F09G8.5">
    <property type="organism name" value="c. elegans"/>
</dbReference>
<dbReference type="AGR" id="WB:WBGene00017320"/>
<dbReference type="CTD" id="184268"/>
<dbReference type="WormBase" id="F09G8.5">
    <property type="protein sequence ID" value="CE43735"/>
    <property type="gene ID" value="WBGene00017320"/>
</dbReference>
<dbReference type="eggNOG" id="KOG2123">
    <property type="taxonomic scope" value="Eukaryota"/>
</dbReference>
<dbReference type="GeneTree" id="ENSGT00390000018807"/>
<dbReference type="HOGENOM" id="CLU_047616_0_0_1"/>
<dbReference type="InParanoid" id="P34390"/>
<dbReference type="OMA" id="RTLWIDE"/>
<dbReference type="OrthoDB" id="1517790at2759"/>
<dbReference type="PRO" id="PR:P34390"/>
<dbReference type="Proteomes" id="UP000001940">
    <property type="component" value="Chromosome III"/>
</dbReference>
<dbReference type="Bgee" id="WBGene00017320">
    <property type="expression patterns" value="Expressed in larva and 3 other cell types or tissues"/>
</dbReference>
<dbReference type="GO" id="GO:0007010">
    <property type="term" value="P:cytoskeleton organization"/>
    <property type="evidence" value="ECO:0000318"/>
    <property type="project" value="GO_Central"/>
</dbReference>
<dbReference type="FunFam" id="3.80.10.10:FF:000094">
    <property type="entry name" value="protein C21orf2 isoform X1"/>
    <property type="match status" value="1"/>
</dbReference>
<dbReference type="Gene3D" id="3.80.10.10">
    <property type="entry name" value="Ribonuclease Inhibitor"/>
    <property type="match status" value="1"/>
</dbReference>
<dbReference type="InterPro" id="IPR001611">
    <property type="entry name" value="Leu-rich_rpt"/>
</dbReference>
<dbReference type="InterPro" id="IPR025875">
    <property type="entry name" value="Leu-rich_rpt_4"/>
</dbReference>
<dbReference type="InterPro" id="IPR032675">
    <property type="entry name" value="LRR_dom_sf"/>
</dbReference>
<dbReference type="InterPro" id="IPR003603">
    <property type="entry name" value="U2A'_phosphoprotein32A_C"/>
</dbReference>
<dbReference type="PANTHER" id="PTHR18849:SF0">
    <property type="entry name" value="CILIA- AND FLAGELLA-ASSOCIATED PROTEIN 410-RELATED"/>
    <property type="match status" value="1"/>
</dbReference>
<dbReference type="PANTHER" id="PTHR18849">
    <property type="entry name" value="LEUCINE RICH REPEAT PROTEIN"/>
    <property type="match status" value="1"/>
</dbReference>
<dbReference type="Pfam" id="PF12799">
    <property type="entry name" value="LRR_4"/>
    <property type="match status" value="1"/>
</dbReference>
<dbReference type="SMART" id="SM00446">
    <property type="entry name" value="LRRcap"/>
    <property type="match status" value="1"/>
</dbReference>
<dbReference type="SUPFAM" id="SSF52058">
    <property type="entry name" value="L domain-like"/>
    <property type="match status" value="1"/>
</dbReference>
<dbReference type="PROSITE" id="PS51450">
    <property type="entry name" value="LRR"/>
    <property type="match status" value="3"/>
</dbReference>
<sequence length="461" mass="52414">MEHLLLFLSCLSMLVSIAFQSVLLPLILHLFSFFLLSFLSFLHFRSFSANNFKHHSLFLVPKRRSFSISVLPAAAPSSPSSNSFLFPSLSHYFYSLRDTTMVKLTESAVYIRTKCSLENVKKLNLWGCGIDDIQVCEKMSLLEVLSLSVNEVKSLAPLQHCKNLKEVYLRKNCLESLDELEYLKELPNLRTLWIDENPCVGEGGQEYRRKVIRVLPNLTKLDDKPVTTTDHQEAIEDSIPECDMHNSHYSARSNRSNSIDLMSRSLYVGPTVVDRIVQPQLLHFGDTSDEERTTYPARSFSVEVPGLPLTEDHTTVYLDSAPQSHIGSRHNLMSQSMYGTLCGTLAEEPSSADGEDDWNDFSIEEDRVMVQMPLAASHRMYQSMHEGMVIEMKRPPVYGRSVSMPRRRATNLTTRASSMSPAREQRLTKIMSAVSVLLDELDTDGLRQVVDEAQRRLKKQR</sequence>
<reference key="1">
    <citation type="journal article" date="1994" name="Nature">
        <title>2.2 Mb of contiguous nucleotide sequence from chromosome III of C. elegans.</title>
        <authorList>
            <person name="Wilson R."/>
            <person name="Ainscough R."/>
            <person name="Anderson K."/>
            <person name="Baynes C."/>
            <person name="Berks M."/>
            <person name="Bonfield J."/>
            <person name="Burton J."/>
            <person name="Connell M."/>
            <person name="Copsey T."/>
            <person name="Cooper J."/>
            <person name="Coulson A."/>
            <person name="Craxton M."/>
            <person name="Dear S."/>
            <person name="Du Z."/>
            <person name="Durbin R."/>
            <person name="Favello A."/>
            <person name="Fraser A."/>
            <person name="Fulton L."/>
            <person name="Gardner A."/>
            <person name="Green P."/>
            <person name="Hawkins T."/>
            <person name="Hillier L."/>
            <person name="Jier M."/>
            <person name="Johnston L."/>
            <person name="Jones M."/>
            <person name="Kershaw J."/>
            <person name="Kirsten J."/>
            <person name="Laisster N."/>
            <person name="Latreille P."/>
            <person name="Lightning J."/>
            <person name="Lloyd C."/>
            <person name="Mortimore B."/>
            <person name="O'Callaghan M."/>
            <person name="Parsons J."/>
            <person name="Percy C."/>
            <person name="Rifken L."/>
            <person name="Roopra A."/>
            <person name="Saunders D."/>
            <person name="Shownkeen R."/>
            <person name="Sims M."/>
            <person name="Smaldon N."/>
            <person name="Smith A."/>
            <person name="Smith M."/>
            <person name="Sonnhammer E."/>
            <person name="Staden R."/>
            <person name="Sulston J."/>
            <person name="Thierry-Mieg J."/>
            <person name="Thomas K."/>
            <person name="Vaudin M."/>
            <person name="Vaughan K."/>
            <person name="Waterston R."/>
            <person name="Watson A."/>
            <person name="Weinstock L."/>
            <person name="Wilkinson-Sproat J."/>
            <person name="Wohldman P."/>
        </authorList>
    </citation>
    <scope>NUCLEOTIDE SEQUENCE [LARGE SCALE GENOMIC DNA]</scope>
    <source>
        <strain>Bristol N2</strain>
    </source>
</reference>
<reference key="2">
    <citation type="journal article" date="1998" name="Science">
        <title>Genome sequence of the nematode C. elegans: a platform for investigating biology.</title>
        <authorList>
            <consortium name="The C. elegans sequencing consortium"/>
        </authorList>
    </citation>
    <scope>NUCLEOTIDE SEQUENCE [LARGE SCALE GENOMIC DNA]</scope>
    <source>
        <strain>Bristol N2</strain>
    </source>
</reference>
<protein>
    <recommendedName>
        <fullName>Uncharacterized protein F09G8.5</fullName>
    </recommendedName>
</protein>